<protein>
    <recommendedName>
        <fullName evidence="1">Elongation factor 4</fullName>
        <shortName evidence="1">EF-4</shortName>
        <ecNumber evidence="1">3.6.5.n1</ecNumber>
    </recommendedName>
    <alternativeName>
        <fullName evidence="1">Ribosomal back-translocase LepA</fullName>
    </alternativeName>
</protein>
<name>LEPA_RHIME</name>
<gene>
    <name evidence="1" type="primary">lepA</name>
    <name type="ordered locus">R00269</name>
    <name type="ORF">SMc00349</name>
</gene>
<keyword id="KW-0997">Cell inner membrane</keyword>
<keyword id="KW-1003">Cell membrane</keyword>
<keyword id="KW-0342">GTP-binding</keyword>
<keyword id="KW-0378">Hydrolase</keyword>
<keyword id="KW-0472">Membrane</keyword>
<keyword id="KW-0547">Nucleotide-binding</keyword>
<keyword id="KW-0648">Protein biosynthesis</keyword>
<keyword id="KW-1185">Reference proteome</keyword>
<proteinExistence type="inferred from homology"/>
<accession>Q92SU3</accession>
<evidence type="ECO:0000255" key="1">
    <source>
        <dbReference type="HAMAP-Rule" id="MF_00071"/>
    </source>
</evidence>
<comment type="function">
    <text evidence="1">Required for accurate and efficient protein synthesis under certain stress conditions. May act as a fidelity factor of the translation reaction, by catalyzing a one-codon backward translocation of tRNAs on improperly translocated ribosomes. Back-translocation proceeds from a post-translocation (POST) complex to a pre-translocation (PRE) complex, thus giving elongation factor G a second chance to translocate the tRNAs correctly. Binds to ribosomes in a GTP-dependent manner.</text>
</comment>
<comment type="catalytic activity">
    <reaction evidence="1">
        <text>GTP + H2O = GDP + phosphate + H(+)</text>
        <dbReference type="Rhea" id="RHEA:19669"/>
        <dbReference type="ChEBI" id="CHEBI:15377"/>
        <dbReference type="ChEBI" id="CHEBI:15378"/>
        <dbReference type="ChEBI" id="CHEBI:37565"/>
        <dbReference type="ChEBI" id="CHEBI:43474"/>
        <dbReference type="ChEBI" id="CHEBI:58189"/>
        <dbReference type="EC" id="3.6.5.n1"/>
    </reaction>
</comment>
<comment type="subcellular location">
    <subcellularLocation>
        <location evidence="1">Cell inner membrane</location>
        <topology evidence="1">Peripheral membrane protein</topology>
        <orientation evidence="1">Cytoplasmic side</orientation>
    </subcellularLocation>
</comment>
<comment type="similarity">
    <text evidence="1">Belongs to the TRAFAC class translation factor GTPase superfamily. Classic translation factor GTPase family. LepA subfamily.</text>
</comment>
<feature type="chain" id="PRO_0000176329" description="Elongation factor 4">
    <location>
        <begin position="1"/>
        <end position="608"/>
    </location>
</feature>
<feature type="domain" description="tr-type G">
    <location>
        <begin position="11"/>
        <end position="193"/>
    </location>
</feature>
<feature type="binding site" evidence="1">
    <location>
        <begin position="23"/>
        <end position="28"/>
    </location>
    <ligand>
        <name>GTP</name>
        <dbReference type="ChEBI" id="CHEBI:37565"/>
    </ligand>
</feature>
<feature type="binding site" evidence="1">
    <location>
        <begin position="140"/>
        <end position="143"/>
    </location>
    <ligand>
        <name>GTP</name>
        <dbReference type="ChEBI" id="CHEBI:37565"/>
    </ligand>
</feature>
<reference key="1">
    <citation type="journal article" date="2001" name="Proc. Natl. Acad. Sci. U.S.A.">
        <title>Analysis of the chromosome sequence of the legume symbiont Sinorhizobium meliloti strain 1021.</title>
        <authorList>
            <person name="Capela D."/>
            <person name="Barloy-Hubler F."/>
            <person name="Gouzy J."/>
            <person name="Bothe G."/>
            <person name="Ampe F."/>
            <person name="Batut J."/>
            <person name="Boistard P."/>
            <person name="Becker A."/>
            <person name="Boutry M."/>
            <person name="Cadieu E."/>
            <person name="Dreano S."/>
            <person name="Gloux S."/>
            <person name="Godrie T."/>
            <person name="Goffeau A."/>
            <person name="Kahn D."/>
            <person name="Kiss E."/>
            <person name="Lelaure V."/>
            <person name="Masuy D."/>
            <person name="Pohl T."/>
            <person name="Portetelle D."/>
            <person name="Puehler A."/>
            <person name="Purnelle B."/>
            <person name="Ramsperger U."/>
            <person name="Renard C."/>
            <person name="Thebault P."/>
            <person name="Vandenbol M."/>
            <person name="Weidner S."/>
            <person name="Galibert F."/>
        </authorList>
    </citation>
    <scope>NUCLEOTIDE SEQUENCE [LARGE SCALE GENOMIC DNA]</scope>
    <source>
        <strain>1021</strain>
    </source>
</reference>
<reference key="2">
    <citation type="journal article" date="2001" name="Science">
        <title>The composite genome of the legume symbiont Sinorhizobium meliloti.</title>
        <authorList>
            <person name="Galibert F."/>
            <person name="Finan T.M."/>
            <person name="Long S.R."/>
            <person name="Puehler A."/>
            <person name="Abola P."/>
            <person name="Ampe F."/>
            <person name="Barloy-Hubler F."/>
            <person name="Barnett M.J."/>
            <person name="Becker A."/>
            <person name="Boistard P."/>
            <person name="Bothe G."/>
            <person name="Boutry M."/>
            <person name="Bowser L."/>
            <person name="Buhrmester J."/>
            <person name="Cadieu E."/>
            <person name="Capela D."/>
            <person name="Chain P."/>
            <person name="Cowie A."/>
            <person name="Davis R.W."/>
            <person name="Dreano S."/>
            <person name="Federspiel N.A."/>
            <person name="Fisher R.F."/>
            <person name="Gloux S."/>
            <person name="Godrie T."/>
            <person name="Goffeau A."/>
            <person name="Golding B."/>
            <person name="Gouzy J."/>
            <person name="Gurjal M."/>
            <person name="Hernandez-Lucas I."/>
            <person name="Hong A."/>
            <person name="Huizar L."/>
            <person name="Hyman R.W."/>
            <person name="Jones T."/>
            <person name="Kahn D."/>
            <person name="Kahn M.L."/>
            <person name="Kalman S."/>
            <person name="Keating D.H."/>
            <person name="Kiss E."/>
            <person name="Komp C."/>
            <person name="Lelaure V."/>
            <person name="Masuy D."/>
            <person name="Palm C."/>
            <person name="Peck M.C."/>
            <person name="Pohl T.M."/>
            <person name="Portetelle D."/>
            <person name="Purnelle B."/>
            <person name="Ramsperger U."/>
            <person name="Surzycki R."/>
            <person name="Thebault P."/>
            <person name="Vandenbol M."/>
            <person name="Vorhoelter F.J."/>
            <person name="Weidner S."/>
            <person name="Wells D.H."/>
            <person name="Wong K."/>
            <person name="Yeh K.-C."/>
            <person name="Batut J."/>
        </authorList>
    </citation>
    <scope>NUCLEOTIDE SEQUENCE [LARGE SCALE GENOMIC DNA]</scope>
    <source>
        <strain>1021</strain>
    </source>
</reference>
<organism>
    <name type="scientific">Rhizobium meliloti (strain 1021)</name>
    <name type="common">Ensifer meliloti</name>
    <name type="synonym">Sinorhizobium meliloti</name>
    <dbReference type="NCBI Taxonomy" id="266834"/>
    <lineage>
        <taxon>Bacteria</taxon>
        <taxon>Pseudomonadati</taxon>
        <taxon>Pseudomonadota</taxon>
        <taxon>Alphaproteobacteria</taxon>
        <taxon>Hyphomicrobiales</taxon>
        <taxon>Rhizobiaceae</taxon>
        <taxon>Sinorhizobium/Ensifer group</taxon>
        <taxon>Sinorhizobium</taxon>
    </lineage>
</organism>
<dbReference type="EC" id="3.6.5.n1" evidence="1"/>
<dbReference type="EMBL" id="AL591688">
    <property type="protein sequence ID" value="CAC41706.1"/>
    <property type="molecule type" value="Genomic_DNA"/>
</dbReference>
<dbReference type="RefSeq" id="NP_384375.1">
    <property type="nucleotide sequence ID" value="NC_003047.1"/>
</dbReference>
<dbReference type="SMR" id="Q92SU3"/>
<dbReference type="EnsemblBacteria" id="CAC41706">
    <property type="protein sequence ID" value="CAC41706"/>
    <property type="gene ID" value="SMc00349"/>
</dbReference>
<dbReference type="KEGG" id="sme:SMc00349"/>
<dbReference type="PATRIC" id="fig|266834.11.peg.1636"/>
<dbReference type="eggNOG" id="COG0481">
    <property type="taxonomic scope" value="Bacteria"/>
</dbReference>
<dbReference type="HOGENOM" id="CLU_009995_3_3_5"/>
<dbReference type="OrthoDB" id="9802948at2"/>
<dbReference type="Proteomes" id="UP000001976">
    <property type="component" value="Chromosome"/>
</dbReference>
<dbReference type="GO" id="GO:0005886">
    <property type="term" value="C:plasma membrane"/>
    <property type="evidence" value="ECO:0007669"/>
    <property type="project" value="UniProtKB-SubCell"/>
</dbReference>
<dbReference type="GO" id="GO:0005525">
    <property type="term" value="F:GTP binding"/>
    <property type="evidence" value="ECO:0007669"/>
    <property type="project" value="UniProtKB-UniRule"/>
</dbReference>
<dbReference type="GO" id="GO:0003924">
    <property type="term" value="F:GTPase activity"/>
    <property type="evidence" value="ECO:0007669"/>
    <property type="project" value="UniProtKB-UniRule"/>
</dbReference>
<dbReference type="GO" id="GO:0097216">
    <property type="term" value="F:guanosine tetraphosphate binding"/>
    <property type="evidence" value="ECO:0007669"/>
    <property type="project" value="UniProtKB-ARBA"/>
</dbReference>
<dbReference type="GO" id="GO:0043022">
    <property type="term" value="F:ribosome binding"/>
    <property type="evidence" value="ECO:0007669"/>
    <property type="project" value="UniProtKB-UniRule"/>
</dbReference>
<dbReference type="GO" id="GO:0003746">
    <property type="term" value="F:translation elongation factor activity"/>
    <property type="evidence" value="ECO:0007669"/>
    <property type="project" value="UniProtKB-UniRule"/>
</dbReference>
<dbReference type="GO" id="GO:0045727">
    <property type="term" value="P:positive regulation of translation"/>
    <property type="evidence" value="ECO:0007669"/>
    <property type="project" value="UniProtKB-UniRule"/>
</dbReference>
<dbReference type="CDD" id="cd03699">
    <property type="entry name" value="EF4_II"/>
    <property type="match status" value="1"/>
</dbReference>
<dbReference type="CDD" id="cd16260">
    <property type="entry name" value="EF4_III"/>
    <property type="match status" value="1"/>
</dbReference>
<dbReference type="CDD" id="cd01890">
    <property type="entry name" value="LepA"/>
    <property type="match status" value="1"/>
</dbReference>
<dbReference type="CDD" id="cd03709">
    <property type="entry name" value="lepA_C"/>
    <property type="match status" value="1"/>
</dbReference>
<dbReference type="FunFam" id="3.40.50.300:FF:000078">
    <property type="entry name" value="Elongation factor 4"/>
    <property type="match status" value="1"/>
</dbReference>
<dbReference type="FunFam" id="2.40.30.10:FF:000015">
    <property type="entry name" value="Translation factor GUF1, mitochondrial"/>
    <property type="match status" value="1"/>
</dbReference>
<dbReference type="FunFam" id="3.30.70.240:FF:000007">
    <property type="entry name" value="Translation factor GUF1, mitochondrial"/>
    <property type="match status" value="1"/>
</dbReference>
<dbReference type="FunFam" id="3.30.70.2570:FF:000001">
    <property type="entry name" value="Translation factor GUF1, mitochondrial"/>
    <property type="match status" value="1"/>
</dbReference>
<dbReference type="FunFam" id="3.30.70.870:FF:000004">
    <property type="entry name" value="Translation factor GUF1, mitochondrial"/>
    <property type="match status" value="1"/>
</dbReference>
<dbReference type="Gene3D" id="3.30.70.240">
    <property type="match status" value="1"/>
</dbReference>
<dbReference type="Gene3D" id="3.30.70.2570">
    <property type="entry name" value="Elongation factor 4, C-terminal domain"/>
    <property type="match status" value="1"/>
</dbReference>
<dbReference type="Gene3D" id="3.30.70.870">
    <property type="entry name" value="Elongation Factor G (Translational Gtpase), domain 3"/>
    <property type="match status" value="1"/>
</dbReference>
<dbReference type="Gene3D" id="3.40.50.300">
    <property type="entry name" value="P-loop containing nucleotide triphosphate hydrolases"/>
    <property type="match status" value="1"/>
</dbReference>
<dbReference type="Gene3D" id="2.40.30.10">
    <property type="entry name" value="Translation factors"/>
    <property type="match status" value="1"/>
</dbReference>
<dbReference type="HAMAP" id="MF_00071">
    <property type="entry name" value="LepA"/>
    <property type="match status" value="1"/>
</dbReference>
<dbReference type="InterPro" id="IPR006297">
    <property type="entry name" value="EF-4"/>
</dbReference>
<dbReference type="InterPro" id="IPR035647">
    <property type="entry name" value="EFG_III/V"/>
</dbReference>
<dbReference type="InterPro" id="IPR000640">
    <property type="entry name" value="EFG_V-like"/>
</dbReference>
<dbReference type="InterPro" id="IPR004161">
    <property type="entry name" value="EFTu-like_2"/>
</dbReference>
<dbReference type="InterPro" id="IPR031157">
    <property type="entry name" value="G_TR_CS"/>
</dbReference>
<dbReference type="InterPro" id="IPR038363">
    <property type="entry name" value="LepA_C_sf"/>
</dbReference>
<dbReference type="InterPro" id="IPR013842">
    <property type="entry name" value="LepA_CTD"/>
</dbReference>
<dbReference type="InterPro" id="IPR035654">
    <property type="entry name" value="LepA_IV"/>
</dbReference>
<dbReference type="InterPro" id="IPR027417">
    <property type="entry name" value="P-loop_NTPase"/>
</dbReference>
<dbReference type="InterPro" id="IPR005225">
    <property type="entry name" value="Small_GTP-bd"/>
</dbReference>
<dbReference type="InterPro" id="IPR000795">
    <property type="entry name" value="T_Tr_GTP-bd_dom"/>
</dbReference>
<dbReference type="NCBIfam" id="TIGR01393">
    <property type="entry name" value="lepA"/>
    <property type="match status" value="1"/>
</dbReference>
<dbReference type="NCBIfam" id="TIGR00231">
    <property type="entry name" value="small_GTP"/>
    <property type="match status" value="1"/>
</dbReference>
<dbReference type="PANTHER" id="PTHR43512:SF4">
    <property type="entry name" value="TRANSLATION FACTOR GUF1 HOMOLOG, CHLOROPLASTIC"/>
    <property type="match status" value="1"/>
</dbReference>
<dbReference type="PANTHER" id="PTHR43512">
    <property type="entry name" value="TRANSLATION FACTOR GUF1-RELATED"/>
    <property type="match status" value="1"/>
</dbReference>
<dbReference type="Pfam" id="PF00679">
    <property type="entry name" value="EFG_C"/>
    <property type="match status" value="1"/>
</dbReference>
<dbReference type="Pfam" id="PF00009">
    <property type="entry name" value="GTP_EFTU"/>
    <property type="match status" value="1"/>
</dbReference>
<dbReference type="Pfam" id="PF03144">
    <property type="entry name" value="GTP_EFTU_D2"/>
    <property type="match status" value="1"/>
</dbReference>
<dbReference type="Pfam" id="PF06421">
    <property type="entry name" value="LepA_C"/>
    <property type="match status" value="1"/>
</dbReference>
<dbReference type="PRINTS" id="PR00315">
    <property type="entry name" value="ELONGATNFCT"/>
</dbReference>
<dbReference type="SUPFAM" id="SSF54980">
    <property type="entry name" value="EF-G C-terminal domain-like"/>
    <property type="match status" value="2"/>
</dbReference>
<dbReference type="SUPFAM" id="SSF52540">
    <property type="entry name" value="P-loop containing nucleoside triphosphate hydrolases"/>
    <property type="match status" value="1"/>
</dbReference>
<dbReference type="PROSITE" id="PS00301">
    <property type="entry name" value="G_TR_1"/>
    <property type="match status" value="1"/>
</dbReference>
<dbReference type="PROSITE" id="PS51722">
    <property type="entry name" value="G_TR_2"/>
    <property type="match status" value="1"/>
</dbReference>
<sequence>MNTPSSKTPLSHIRNFSIVAHIDHGKSTLADRLIQSTGGLAEREMSEQVLDSMDIERERGITIKAQTVRLHYKANDGETYVLNLIDTPGHVDFAYEVSRSLSACEGSLLVVDASQGVEAQTLANVYQAIDNNHELVTVLNKIDLPAAEPERIKEQIEEVIGIDASDAVLISAKTGLGIPDVLEAIVHKLPAPKSEGGDTAPLKALLVDSWYDAYLGVMVLVRVIDGTLKKGMTIRMMGTDAKYQVERVGVLTPKMVAMEALGPGEIGFITASIKEVADTRVGDTITEDKRPTAKALPGFKPAQPVVFCGLFPVDAADFEDLRSAMGKLRLNDASFSFEMESSAALGFGFRCGFLGLLHLEIIQERLEREFDLDLIATAPSVVYKLFMTDGSERELHNPADMPDVVKIAEIHEPWIRATILTPDEYLGGILKLCQDRRGIQIELTYVGTRAMLTYDLPLNEVVFDFYDRLKSISKGYASFDYQITEHKEGNLVKMSILVNGEPVDALSMMVHRMAAEKRGREMCEKLKELIPKHMFKIPIQAAIGGNVIARETISALRKDVTAKCYGGDATRKRKLLEKQKAGKKRMRQFGKVEIPQEAFIAALKMSDE</sequence>